<protein>
    <recommendedName>
        <fullName evidence="10">Zinc transporter ZIP10</fullName>
    </recommendedName>
    <alternativeName>
        <fullName>Solute carrier family 39 member 10</fullName>
    </alternativeName>
    <alternativeName>
        <fullName>Zrt- and Irt-like protein 10</fullName>
        <shortName>ZIP-10</shortName>
    </alternativeName>
</protein>
<organism>
    <name type="scientific">Homo sapiens</name>
    <name type="common">Human</name>
    <dbReference type="NCBI Taxonomy" id="9606"/>
    <lineage>
        <taxon>Eukaryota</taxon>
        <taxon>Metazoa</taxon>
        <taxon>Chordata</taxon>
        <taxon>Craniata</taxon>
        <taxon>Vertebrata</taxon>
        <taxon>Euteleostomi</taxon>
        <taxon>Mammalia</taxon>
        <taxon>Eutheria</taxon>
        <taxon>Euarchontoglires</taxon>
        <taxon>Primates</taxon>
        <taxon>Haplorrhini</taxon>
        <taxon>Catarrhini</taxon>
        <taxon>Hominidae</taxon>
        <taxon>Homo</taxon>
    </lineage>
</organism>
<keyword id="KW-0025">Alternative splicing</keyword>
<keyword id="KW-1003">Cell membrane</keyword>
<keyword id="KW-0325">Glycoprotein</keyword>
<keyword id="KW-0406">Ion transport</keyword>
<keyword id="KW-0472">Membrane</keyword>
<keyword id="KW-0597">Phosphoprotein</keyword>
<keyword id="KW-1267">Proteomics identification</keyword>
<keyword id="KW-1185">Reference proteome</keyword>
<keyword id="KW-0732">Signal</keyword>
<keyword id="KW-0812">Transmembrane</keyword>
<keyword id="KW-1133">Transmembrane helix</keyword>
<keyword id="KW-0813">Transport</keyword>
<keyword id="KW-0862">Zinc</keyword>
<keyword id="KW-0864">Zinc transport</keyword>
<proteinExistence type="evidence at protein level"/>
<evidence type="ECO:0000250" key="1">
    <source>
        <dbReference type="UniProtKB" id="Q6P5F6"/>
    </source>
</evidence>
<evidence type="ECO:0000255" key="2"/>
<evidence type="ECO:0000256" key="3">
    <source>
        <dbReference type="SAM" id="MobiDB-lite"/>
    </source>
</evidence>
<evidence type="ECO:0000269" key="4">
    <source>
    </source>
</evidence>
<evidence type="ECO:0000269" key="5">
    <source>
    </source>
</evidence>
<evidence type="ECO:0000269" key="6">
    <source>
    </source>
</evidence>
<evidence type="ECO:0000269" key="7">
    <source>
    </source>
</evidence>
<evidence type="ECO:0000269" key="8">
    <source>
    </source>
</evidence>
<evidence type="ECO:0000303" key="9">
    <source>
    </source>
</evidence>
<evidence type="ECO:0000305" key="10"/>
<evidence type="ECO:0000305" key="11">
    <source>
    </source>
</evidence>
<evidence type="ECO:0000312" key="12">
    <source>
        <dbReference type="HGNC" id="HGNC:20861"/>
    </source>
</evidence>
<evidence type="ECO:0007744" key="13">
    <source>
    </source>
</evidence>
<evidence type="ECO:0007744" key="14">
    <source>
    </source>
</evidence>
<evidence type="ECO:0007744" key="15">
    <source>
    </source>
</evidence>
<accession>Q9ULF5</accession>
<accession>A8K5C6</accession>
<accession>B4DGU0</accession>
<accession>Q3MJA4</accession>
<accession>Q68CR5</accession>
<accession>Q6DKH6</accession>
<accession>Q9Y3Z1</accession>
<name>S39AA_HUMAN</name>
<gene>
    <name evidence="12" type="primary">SLC39A10</name>
    <name type="synonym">KIAA1265</name>
    <name type="synonym">ZIP10</name>
</gene>
<reference key="1">
    <citation type="journal article" date="1999" name="DNA Res.">
        <title>Prediction of the coding sequences of unidentified human genes. XV. The complete sequences of 100 new cDNA clones from brain which code for large proteins in vitro.</title>
        <authorList>
            <person name="Nagase T."/>
            <person name="Ishikawa K."/>
            <person name="Kikuno R."/>
            <person name="Hirosawa M."/>
            <person name="Nomura N."/>
            <person name="Ohara O."/>
        </authorList>
    </citation>
    <scope>NUCLEOTIDE SEQUENCE [LARGE SCALE MRNA] (ISOFORM 1)</scope>
    <source>
        <tissue>Brain</tissue>
    </source>
</reference>
<reference key="2">
    <citation type="journal article" date="2004" name="Nat. Genet.">
        <title>Complete sequencing and characterization of 21,243 full-length human cDNAs.</title>
        <authorList>
            <person name="Ota T."/>
            <person name="Suzuki Y."/>
            <person name="Nishikawa T."/>
            <person name="Otsuki T."/>
            <person name="Sugiyama T."/>
            <person name="Irie R."/>
            <person name="Wakamatsu A."/>
            <person name="Hayashi K."/>
            <person name="Sato H."/>
            <person name="Nagai K."/>
            <person name="Kimura K."/>
            <person name="Makita H."/>
            <person name="Sekine M."/>
            <person name="Obayashi M."/>
            <person name="Nishi T."/>
            <person name="Shibahara T."/>
            <person name="Tanaka T."/>
            <person name="Ishii S."/>
            <person name="Yamamoto J."/>
            <person name="Saito K."/>
            <person name="Kawai Y."/>
            <person name="Isono Y."/>
            <person name="Nakamura Y."/>
            <person name="Nagahari K."/>
            <person name="Murakami K."/>
            <person name="Yasuda T."/>
            <person name="Iwayanagi T."/>
            <person name="Wagatsuma M."/>
            <person name="Shiratori A."/>
            <person name="Sudo H."/>
            <person name="Hosoiri T."/>
            <person name="Kaku Y."/>
            <person name="Kodaira H."/>
            <person name="Kondo H."/>
            <person name="Sugawara M."/>
            <person name="Takahashi M."/>
            <person name="Kanda K."/>
            <person name="Yokoi T."/>
            <person name="Furuya T."/>
            <person name="Kikkawa E."/>
            <person name="Omura Y."/>
            <person name="Abe K."/>
            <person name="Kamihara K."/>
            <person name="Katsuta N."/>
            <person name="Sato K."/>
            <person name="Tanikawa M."/>
            <person name="Yamazaki M."/>
            <person name="Ninomiya K."/>
            <person name="Ishibashi T."/>
            <person name="Yamashita H."/>
            <person name="Murakawa K."/>
            <person name="Fujimori K."/>
            <person name="Tanai H."/>
            <person name="Kimata M."/>
            <person name="Watanabe M."/>
            <person name="Hiraoka S."/>
            <person name="Chiba Y."/>
            <person name="Ishida S."/>
            <person name="Ono Y."/>
            <person name="Takiguchi S."/>
            <person name="Watanabe S."/>
            <person name="Yosida M."/>
            <person name="Hotuta T."/>
            <person name="Kusano J."/>
            <person name="Kanehori K."/>
            <person name="Takahashi-Fujii A."/>
            <person name="Hara H."/>
            <person name="Tanase T.-O."/>
            <person name="Nomura Y."/>
            <person name="Togiya S."/>
            <person name="Komai F."/>
            <person name="Hara R."/>
            <person name="Takeuchi K."/>
            <person name="Arita M."/>
            <person name="Imose N."/>
            <person name="Musashino K."/>
            <person name="Yuuki H."/>
            <person name="Oshima A."/>
            <person name="Sasaki N."/>
            <person name="Aotsuka S."/>
            <person name="Yoshikawa Y."/>
            <person name="Matsunawa H."/>
            <person name="Ichihara T."/>
            <person name="Shiohata N."/>
            <person name="Sano S."/>
            <person name="Moriya S."/>
            <person name="Momiyama H."/>
            <person name="Satoh N."/>
            <person name="Takami S."/>
            <person name="Terashima Y."/>
            <person name="Suzuki O."/>
            <person name="Nakagawa S."/>
            <person name="Senoh A."/>
            <person name="Mizoguchi H."/>
            <person name="Goto Y."/>
            <person name="Shimizu F."/>
            <person name="Wakebe H."/>
            <person name="Hishigaki H."/>
            <person name="Watanabe T."/>
            <person name="Sugiyama A."/>
            <person name="Takemoto M."/>
            <person name="Kawakami B."/>
            <person name="Yamazaki M."/>
            <person name="Watanabe K."/>
            <person name="Kumagai A."/>
            <person name="Itakura S."/>
            <person name="Fukuzumi Y."/>
            <person name="Fujimori Y."/>
            <person name="Komiyama M."/>
            <person name="Tashiro H."/>
            <person name="Tanigami A."/>
            <person name="Fujiwara T."/>
            <person name="Ono T."/>
            <person name="Yamada K."/>
            <person name="Fujii Y."/>
            <person name="Ozaki K."/>
            <person name="Hirao M."/>
            <person name="Ohmori Y."/>
            <person name="Kawabata A."/>
            <person name="Hikiji T."/>
            <person name="Kobatake N."/>
            <person name="Inagaki H."/>
            <person name="Ikema Y."/>
            <person name="Okamoto S."/>
            <person name="Okitani R."/>
            <person name="Kawakami T."/>
            <person name="Noguchi S."/>
            <person name="Itoh T."/>
            <person name="Shigeta K."/>
            <person name="Senba T."/>
            <person name="Matsumura K."/>
            <person name="Nakajima Y."/>
            <person name="Mizuno T."/>
            <person name="Morinaga M."/>
            <person name="Sasaki M."/>
            <person name="Togashi T."/>
            <person name="Oyama M."/>
            <person name="Hata H."/>
            <person name="Watanabe M."/>
            <person name="Komatsu T."/>
            <person name="Mizushima-Sugano J."/>
            <person name="Satoh T."/>
            <person name="Shirai Y."/>
            <person name="Takahashi Y."/>
            <person name="Nakagawa K."/>
            <person name="Okumura K."/>
            <person name="Nagase T."/>
            <person name="Nomura N."/>
            <person name="Kikuchi H."/>
            <person name="Masuho Y."/>
            <person name="Yamashita R."/>
            <person name="Nakai K."/>
            <person name="Yada T."/>
            <person name="Nakamura Y."/>
            <person name="Ohara O."/>
            <person name="Isogai T."/>
            <person name="Sugano S."/>
        </authorList>
    </citation>
    <scope>NUCLEOTIDE SEQUENCE [LARGE SCALE MRNA] (ISOFORMS 1 AND 2)</scope>
    <source>
        <tissue>Brain</tissue>
    </source>
</reference>
<reference key="3">
    <citation type="journal article" date="2007" name="BMC Genomics">
        <title>The full-ORF clone resource of the German cDNA consortium.</title>
        <authorList>
            <person name="Bechtel S."/>
            <person name="Rosenfelder H."/>
            <person name="Duda A."/>
            <person name="Schmidt C.P."/>
            <person name="Ernst U."/>
            <person name="Wellenreuther R."/>
            <person name="Mehrle A."/>
            <person name="Schuster C."/>
            <person name="Bahr A."/>
            <person name="Bloecker H."/>
            <person name="Heubner D."/>
            <person name="Hoerlein A."/>
            <person name="Michel G."/>
            <person name="Wedler H."/>
            <person name="Koehrer K."/>
            <person name="Ottenwaelder B."/>
            <person name="Poustka A."/>
            <person name="Wiemann S."/>
            <person name="Schupp I."/>
        </authorList>
    </citation>
    <scope>NUCLEOTIDE SEQUENCE [LARGE SCALE MRNA] (ISOFORM 1)</scope>
    <source>
        <tissue>Brain</tissue>
        <tissue>Colon carcinoma</tissue>
    </source>
</reference>
<reference key="4">
    <citation type="journal article" date="2005" name="Nature">
        <title>Generation and annotation of the DNA sequences of human chromosomes 2 and 4.</title>
        <authorList>
            <person name="Hillier L.W."/>
            <person name="Graves T.A."/>
            <person name="Fulton R.S."/>
            <person name="Fulton L.A."/>
            <person name="Pepin K.H."/>
            <person name="Minx P."/>
            <person name="Wagner-McPherson C."/>
            <person name="Layman D."/>
            <person name="Wylie K."/>
            <person name="Sekhon M."/>
            <person name="Becker M.C."/>
            <person name="Fewell G.A."/>
            <person name="Delehaunty K.D."/>
            <person name="Miner T.L."/>
            <person name="Nash W.E."/>
            <person name="Kremitzki C."/>
            <person name="Oddy L."/>
            <person name="Du H."/>
            <person name="Sun H."/>
            <person name="Bradshaw-Cordum H."/>
            <person name="Ali J."/>
            <person name="Carter J."/>
            <person name="Cordes M."/>
            <person name="Harris A."/>
            <person name="Isak A."/>
            <person name="van Brunt A."/>
            <person name="Nguyen C."/>
            <person name="Du F."/>
            <person name="Courtney L."/>
            <person name="Kalicki J."/>
            <person name="Ozersky P."/>
            <person name="Abbott S."/>
            <person name="Armstrong J."/>
            <person name="Belter E.A."/>
            <person name="Caruso L."/>
            <person name="Cedroni M."/>
            <person name="Cotton M."/>
            <person name="Davidson T."/>
            <person name="Desai A."/>
            <person name="Elliott G."/>
            <person name="Erb T."/>
            <person name="Fronick C."/>
            <person name="Gaige T."/>
            <person name="Haakenson W."/>
            <person name="Haglund K."/>
            <person name="Holmes A."/>
            <person name="Harkins R."/>
            <person name="Kim K."/>
            <person name="Kruchowski S.S."/>
            <person name="Strong C.M."/>
            <person name="Grewal N."/>
            <person name="Goyea E."/>
            <person name="Hou S."/>
            <person name="Levy A."/>
            <person name="Martinka S."/>
            <person name="Mead K."/>
            <person name="McLellan M.D."/>
            <person name="Meyer R."/>
            <person name="Randall-Maher J."/>
            <person name="Tomlinson C."/>
            <person name="Dauphin-Kohlberg S."/>
            <person name="Kozlowicz-Reilly A."/>
            <person name="Shah N."/>
            <person name="Swearengen-Shahid S."/>
            <person name="Snider J."/>
            <person name="Strong J.T."/>
            <person name="Thompson J."/>
            <person name="Yoakum M."/>
            <person name="Leonard S."/>
            <person name="Pearman C."/>
            <person name="Trani L."/>
            <person name="Radionenko M."/>
            <person name="Waligorski J.E."/>
            <person name="Wang C."/>
            <person name="Rock S.M."/>
            <person name="Tin-Wollam A.-M."/>
            <person name="Maupin R."/>
            <person name="Latreille P."/>
            <person name="Wendl M.C."/>
            <person name="Yang S.-P."/>
            <person name="Pohl C."/>
            <person name="Wallis J.W."/>
            <person name="Spieth J."/>
            <person name="Bieri T.A."/>
            <person name="Berkowicz N."/>
            <person name="Nelson J.O."/>
            <person name="Osborne J."/>
            <person name="Ding L."/>
            <person name="Meyer R."/>
            <person name="Sabo A."/>
            <person name="Shotland Y."/>
            <person name="Sinha P."/>
            <person name="Wohldmann P.E."/>
            <person name="Cook L.L."/>
            <person name="Hickenbotham M.T."/>
            <person name="Eldred J."/>
            <person name="Williams D."/>
            <person name="Jones T.A."/>
            <person name="She X."/>
            <person name="Ciccarelli F.D."/>
            <person name="Izaurralde E."/>
            <person name="Taylor J."/>
            <person name="Schmutz J."/>
            <person name="Myers R.M."/>
            <person name="Cox D.R."/>
            <person name="Huang X."/>
            <person name="McPherson J.D."/>
            <person name="Mardis E.R."/>
            <person name="Clifton S.W."/>
            <person name="Warren W.C."/>
            <person name="Chinwalla A.T."/>
            <person name="Eddy S.R."/>
            <person name="Marra M.A."/>
            <person name="Ovcharenko I."/>
            <person name="Furey T.S."/>
            <person name="Miller W."/>
            <person name="Eichler E.E."/>
            <person name="Bork P."/>
            <person name="Suyama M."/>
            <person name="Torrents D."/>
            <person name="Waterston R.H."/>
            <person name="Wilson R.K."/>
        </authorList>
    </citation>
    <scope>NUCLEOTIDE SEQUENCE [LARGE SCALE GENOMIC DNA]</scope>
</reference>
<reference key="5">
    <citation type="submission" date="2005-07" db="EMBL/GenBank/DDBJ databases">
        <authorList>
            <person name="Mural R.J."/>
            <person name="Istrail S."/>
            <person name="Sutton G.G."/>
            <person name="Florea L."/>
            <person name="Halpern A.L."/>
            <person name="Mobarry C.M."/>
            <person name="Lippert R."/>
            <person name="Walenz B."/>
            <person name="Shatkay H."/>
            <person name="Dew I."/>
            <person name="Miller J.R."/>
            <person name="Flanigan M.J."/>
            <person name="Edwards N.J."/>
            <person name="Bolanos R."/>
            <person name="Fasulo D."/>
            <person name="Halldorsson B.V."/>
            <person name="Hannenhalli S."/>
            <person name="Turner R."/>
            <person name="Yooseph S."/>
            <person name="Lu F."/>
            <person name="Nusskern D.R."/>
            <person name="Shue B.C."/>
            <person name="Zheng X.H."/>
            <person name="Zhong F."/>
            <person name="Delcher A.L."/>
            <person name="Huson D.H."/>
            <person name="Kravitz S.A."/>
            <person name="Mouchard L."/>
            <person name="Reinert K."/>
            <person name="Remington K.A."/>
            <person name="Clark A.G."/>
            <person name="Waterman M.S."/>
            <person name="Eichler E.E."/>
            <person name="Adams M.D."/>
            <person name="Hunkapiller M.W."/>
            <person name="Myers E.W."/>
            <person name="Venter J.C."/>
        </authorList>
    </citation>
    <scope>NUCLEOTIDE SEQUENCE [LARGE SCALE GENOMIC DNA]</scope>
</reference>
<reference key="6">
    <citation type="journal article" date="2004" name="Genome Res.">
        <title>The status, quality, and expansion of the NIH full-length cDNA project: the Mammalian Gene Collection (MGC).</title>
        <authorList>
            <consortium name="The MGC Project Team"/>
        </authorList>
    </citation>
    <scope>NUCLEOTIDE SEQUENCE [LARGE SCALE MRNA] (ISOFORM 1)</scope>
    <source>
        <tissue>Brain</tissue>
        <tissue>Testis</tissue>
    </source>
</reference>
<reference key="7">
    <citation type="journal article" date="2007" name="Cancer Sci.">
        <title>Zinc and its transporter ZIP10 are involved in invasive behavior of breast cancer cells.</title>
        <authorList>
            <person name="Kagara N."/>
            <person name="Tanaka N."/>
            <person name="Noguchi S."/>
            <person name="Hirano T."/>
        </authorList>
    </citation>
    <scope>FUNCTION</scope>
    <scope>TRANSPORTER ACTIVITY</scope>
    <scope>INDUCTION</scope>
</reference>
<reference key="8">
    <citation type="journal article" date="2008" name="Mol. Cell">
        <title>Kinase-selective enrichment enables quantitative phosphoproteomics of the kinome across the cell cycle.</title>
        <authorList>
            <person name="Daub H."/>
            <person name="Olsen J.V."/>
            <person name="Bairlein M."/>
            <person name="Gnad F."/>
            <person name="Oppermann F.S."/>
            <person name="Korner R."/>
            <person name="Greff Z."/>
            <person name="Keri G."/>
            <person name="Stemmann O."/>
            <person name="Mann M."/>
        </authorList>
    </citation>
    <scope>PHOSPHORYLATION [LARGE SCALE ANALYSIS] AT THR-553</scope>
    <scope>IDENTIFICATION BY MASS SPECTROMETRY [LARGE SCALE ANALYSIS]</scope>
    <source>
        <tissue>Cervix carcinoma</tissue>
    </source>
</reference>
<reference key="9">
    <citation type="journal article" date="2011" name="Sci. Signal.">
        <title>System-wide temporal characterization of the proteome and phosphoproteome of human embryonic stem cell differentiation.</title>
        <authorList>
            <person name="Rigbolt K.T."/>
            <person name="Prokhorova T.A."/>
            <person name="Akimov V."/>
            <person name="Henningsen J."/>
            <person name="Johansen P.T."/>
            <person name="Kratchmarova I."/>
            <person name="Kassem M."/>
            <person name="Mann M."/>
            <person name="Olsen J.V."/>
            <person name="Blagoev B."/>
        </authorList>
    </citation>
    <scope>PHOSPHORYLATION [LARGE SCALE ANALYSIS] AT THR-536 AND SER-591</scope>
    <scope>IDENTIFICATION BY MASS SPECTROMETRY [LARGE SCALE ANALYSIS]</scope>
</reference>
<reference key="10">
    <citation type="journal article" date="2013" name="J. Proteome Res.">
        <title>Toward a comprehensive characterization of a human cancer cell phosphoproteome.</title>
        <authorList>
            <person name="Zhou H."/>
            <person name="Di Palma S."/>
            <person name="Preisinger C."/>
            <person name="Peng M."/>
            <person name="Polat A.N."/>
            <person name="Heck A.J."/>
            <person name="Mohammed S."/>
        </authorList>
    </citation>
    <scope>PHOSPHORYLATION [LARGE SCALE ANALYSIS] AT SER-591</scope>
    <scope>IDENTIFICATION BY MASS SPECTROMETRY [LARGE SCALE ANALYSIS]</scope>
    <source>
        <tissue>Cervix carcinoma</tissue>
    </source>
</reference>
<reference key="11">
    <citation type="journal article" date="2016" name="Biochem. J.">
        <title>Zinc transporter ZIP10 forms a heteromer with ZIP6 which regulates embryonic development and cell migration.</title>
        <authorList>
            <person name="Taylor K.M."/>
            <person name="Muraina I.A."/>
            <person name="Brethour D."/>
            <person name="Schmitt-Ulms G."/>
            <person name="Nimmanon T."/>
            <person name="Ziliotto S."/>
            <person name="Kille P."/>
            <person name="Hogstrand C."/>
        </authorList>
    </citation>
    <scope>SUBCELLULAR LOCATION</scope>
    <scope>FUNCTION</scope>
    <scope>TRANSPORTER ACTIVITY</scope>
    <scope>INDUCTION</scope>
    <scope>INTERACTION WITH SLC39A6</scope>
</reference>
<reference key="12">
    <citation type="journal article" date="2019" name="Am. J. Physiol.">
        <title>Cloning, function, and localization of human, canine, and Drosophila ZIP10 (SLC39A10), a Zn2+ transporter.</title>
        <authorList>
            <person name="Landry G.M."/>
            <person name="Furrow E."/>
            <person name="Holmes H.L."/>
            <person name="Hirata T."/>
            <person name="Kato A."/>
            <person name="Williams P."/>
            <person name="Strohmaier K."/>
            <person name="Gallo C.J.R."/>
            <person name="Chang M."/>
            <person name="Pandey M.K."/>
            <person name="Jiang H."/>
            <person name="Bansal A."/>
            <person name="Franz M.C."/>
            <person name="Montalbetti N."/>
            <person name="Alexander M.P."/>
            <person name="Cabrero P."/>
            <person name="Dow J.A.T."/>
            <person name="DeGrado T.R."/>
            <person name="Romero M.F."/>
        </authorList>
    </citation>
    <scope>FUNCTION</scope>
    <scope>TRANSPORTER ACTIVITY</scope>
    <scope>SUBCELLULAR LOCATION</scope>
</reference>
<reference key="13">
    <citation type="journal article" date="2021" name="Cell. Mol. Life Sci.">
        <title>The ZIP6/ZIP10 heteromer is essential for the zinc-mediated trigger of mitosis.</title>
        <authorList>
            <person name="Nimmanon T."/>
            <person name="Ziliotto S."/>
            <person name="Ogle O."/>
            <person name="Burt A."/>
            <person name="Gee J.M.W."/>
            <person name="Andrews G.K."/>
            <person name="Kille P."/>
            <person name="Hogstrand C."/>
            <person name="Maret W."/>
            <person name="Taylor K.M."/>
        </authorList>
    </citation>
    <scope>SUBUNIT</scope>
    <scope>FUNCTION</scope>
    <scope>IDENTIFICATION IN A COMPLEX WITH SLC39A10 AND STAT3</scope>
    <scope>PROTEOLYTIC CLEAVAGE</scope>
</reference>
<sequence length="831" mass="94132">MKVHMHTKFCLICLLTFIFHHCNHCHEEHDHGPEALHRQHRGMTELEPSKFSKQAAENEKKYYIEKLFERYGENGRLSFFGLEKLLTNLGLGERKVVEINHEDLGHDHVSHLDILAVQEGKHFHSHNHQHSHNHLNSENQTVTSVSTKRNHKCDPEKETVEVSVKSDDKHMHDHNHRLRHHHRLHHHLDHNNTHHFHNDSITPSERGEPSNEPSTETNKTQEQSDVKLPKGKRKKKGRKSNENSEVITPGFPPNHDQGEQYEHNRVHKPDRVHNPGHSHVHLPERNGHDPGRGHQDLDPDNEGELRHTRKREAPHVKNNAIISLRKDLNEDDHHHECLNVTQLLKYYGHGANSPISTDLFTYLCPALLYQIDSRLCIEHFDKLLVEDINKDKNLVPEDEANIGASAWICGIISITVISLLSLLGVILVPIINQGCFKFLLTFLVALAVGTMSGDALLHLLPHSQGGHDHSHQHAHGHGHSHGHESNKFLEEYDAVLKGLVALGGIYLLFIIEHCIRMFKHYKQQRGKQKWFMKQNTEESTIGRKLSDHKLNNTPDSDWLQLKPLAGTDDSVVSEDRLNETELTDLEGQQESPPKNYLCIEEEKIIDHSHSDGLHTIHEHDLHAAAHNHHGENKTVLRKHNHQWHHKHSHHSHGPCHSGSDLKETGIANIAWMVIMGDGIHNFSDGLAIGAAFSAGLTGGISTSIAVFCHELPHELGDFAVLLKAGMTVKQAIVYNLLSAMMAYIGMLIGTAVGQYANNITLWIFAVTAGMFLYVALVDMLPEMLHGDGDNEEHGFCPVGQFILQNLGLLFGFAIMLVIALYEDKIVFDIQF</sequence>
<comment type="function">
    <text evidence="1 4 5 6 7 8">Zinc-influx transporter (PubMed:17359283, PubMed:27274087, PubMed:30520657). When associated with SLC39A6, the heterodimer formed by SLC39A10 and SLC39A6 mediates cellular zinc uptake to trigger cells to undergo epithelial-to-mesenchymal transition (EMT) (PubMed:23186163). SLC39A10-SLC39A6 heterodimers play also an essentiel role in initiating mitosis by importing zinc into cells to initiate a pathway resulting in the onset of mitosis (PubMed:32797246). Plays an important for both mature B-cell maintenance and humoral immune responses (By similarity). When associated with SLC39A10, the heterodimer controls NCAM1 phosphorylation and integration into focal adhesion complexes during EMT (By similarity).</text>
</comment>
<comment type="catalytic activity">
    <reaction evidence="4 6 7">
        <text>Zn(2+)(in) = Zn(2+)(out)</text>
        <dbReference type="Rhea" id="RHEA:29351"/>
        <dbReference type="ChEBI" id="CHEBI:29105"/>
    </reaction>
    <physiologicalReaction direction="right-to-left" evidence="11">
        <dbReference type="Rhea" id="RHEA:29353"/>
    </physiologicalReaction>
</comment>
<comment type="subunit">
    <text evidence="1 6 8">Interacts with SLC39A6; which triggers cells to undergo EMT and mitosis (PubMed:27274087, PubMed:32797246). Found in a complex with SLC39A6, SLC39A10 and with the 'Ser-727' phosphorylated form of STAT3 throughout mitosis (PubMed:32797246). Found in a complex with SLC39A6, SLC39A10 and with NCAM1; this complex controls NCAM1 phosphorylation and integration into focal adhesion complexes during epithelial-tomesenchymal transition. Found in a complex with SLC39A6, SLC39A10 and with GSK3B that controls NCAM1 phosphorylation (By similarity).</text>
</comment>
<comment type="subcellular location">
    <subcellularLocation>
        <location evidence="6">Cell membrane</location>
        <topology evidence="2">Multi-pass membrane protein</topology>
    </subcellularLocation>
    <subcellularLocation>
        <location evidence="7">Apical cell membrane</location>
        <topology evidence="2">Multi-pass membrane protein</topology>
    </subcellularLocation>
    <text evidence="7">Expressed at the apical membranes of proximal tubules in the kidney.</text>
</comment>
<comment type="alternative products">
    <event type="alternative splicing"/>
    <isoform>
        <id>Q9ULF5-1</id>
        <name>1</name>
        <sequence type="displayed"/>
    </isoform>
    <isoform>
        <id>Q9ULF5-2</id>
        <name>2</name>
        <sequence type="described" ref="VSP_055991"/>
    </isoform>
</comment>
<comment type="induction">
    <text evidence="4 6">Up-regulated in several breast cancer lines, and correlated to cancer progression as a marker of metastatic breast cancer.</text>
</comment>
<comment type="PTM">
    <text evidence="8">Undergoes N-terminal ectodomain shedding.</text>
</comment>
<comment type="similarity">
    <text evidence="10">Belongs to the ZIP transporter (TC 2.A.5) family.</text>
</comment>
<comment type="sequence caution" evidence="10">
    <conflict type="erroneous initiation">
        <sequence resource="EMBL-CDS" id="BAA86579"/>
    </conflict>
</comment>
<comment type="sequence caution" evidence="10">
    <conflict type="miscellaneous discrepancy">
        <sequence resource="EMBL-CDS" id="CAB43393"/>
    </conflict>
    <text>Contaminating sequence. Potential poly-A sequence.</text>
</comment>
<dbReference type="EMBL" id="AB033091">
    <property type="protein sequence ID" value="BAA86579.1"/>
    <property type="status" value="ALT_INIT"/>
    <property type="molecule type" value="mRNA"/>
</dbReference>
<dbReference type="EMBL" id="AK291241">
    <property type="protein sequence ID" value="BAF83930.1"/>
    <property type="molecule type" value="mRNA"/>
</dbReference>
<dbReference type="EMBL" id="AK294771">
    <property type="protein sequence ID" value="BAG57901.1"/>
    <property type="molecule type" value="mRNA"/>
</dbReference>
<dbReference type="EMBL" id="AL050294">
    <property type="protein sequence ID" value="CAB43393.1"/>
    <property type="status" value="ALT_SEQ"/>
    <property type="molecule type" value="mRNA"/>
</dbReference>
<dbReference type="EMBL" id="CR749813">
    <property type="protein sequence ID" value="CAH18673.1"/>
    <property type="molecule type" value="mRNA"/>
</dbReference>
<dbReference type="EMBL" id="AC013274">
    <property type="status" value="NOT_ANNOTATED_CDS"/>
    <property type="molecule type" value="Genomic_DNA"/>
</dbReference>
<dbReference type="EMBL" id="AC064834">
    <property type="status" value="NOT_ANNOTATED_CDS"/>
    <property type="molecule type" value="Genomic_DNA"/>
</dbReference>
<dbReference type="EMBL" id="CH471063">
    <property type="protein sequence ID" value="EAW70116.1"/>
    <property type="molecule type" value="Genomic_DNA"/>
</dbReference>
<dbReference type="EMBL" id="BC073909">
    <property type="protein sequence ID" value="AAH73909.1"/>
    <property type="molecule type" value="mRNA"/>
</dbReference>
<dbReference type="EMBL" id="BC101516">
    <property type="protein sequence ID" value="AAI01517.1"/>
    <property type="molecule type" value="mRNA"/>
</dbReference>
<dbReference type="EMBL" id="BC112223">
    <property type="protein sequence ID" value="AAI12224.1"/>
    <property type="molecule type" value="mRNA"/>
</dbReference>
<dbReference type="CCDS" id="CCDS33353.1">
    <molecule id="Q9ULF5-1"/>
</dbReference>
<dbReference type="PIR" id="T08684">
    <property type="entry name" value="T08684"/>
</dbReference>
<dbReference type="RefSeq" id="NP_001120729.1">
    <molecule id="Q9ULF5-1"/>
    <property type="nucleotide sequence ID" value="NM_001127257.2"/>
</dbReference>
<dbReference type="RefSeq" id="NP_065075.1">
    <molecule id="Q9ULF5-1"/>
    <property type="nucleotide sequence ID" value="NM_020342.3"/>
</dbReference>
<dbReference type="RefSeq" id="XP_005246746.2">
    <property type="nucleotide sequence ID" value="XM_005246689.4"/>
</dbReference>
<dbReference type="RefSeq" id="XP_011509806.1">
    <molecule id="Q9ULF5-1"/>
    <property type="nucleotide sequence ID" value="XM_011511504.3"/>
</dbReference>
<dbReference type="RefSeq" id="XP_011509807.1">
    <property type="nucleotide sequence ID" value="XM_011511505.2"/>
</dbReference>
<dbReference type="RefSeq" id="XP_011509808.1">
    <property type="nucleotide sequence ID" value="XM_011511506.2"/>
</dbReference>
<dbReference type="RefSeq" id="XP_047301099.1">
    <molecule id="Q9ULF5-1"/>
    <property type="nucleotide sequence ID" value="XM_047445143.1"/>
</dbReference>
<dbReference type="RefSeq" id="XP_047301100.1">
    <molecule id="Q9ULF5-1"/>
    <property type="nucleotide sequence ID" value="XM_047445144.1"/>
</dbReference>
<dbReference type="RefSeq" id="XP_054199059.1">
    <molecule id="Q9ULF5-1"/>
    <property type="nucleotide sequence ID" value="XM_054343084.1"/>
</dbReference>
<dbReference type="RefSeq" id="XP_054199060.1">
    <molecule id="Q9ULF5-1"/>
    <property type="nucleotide sequence ID" value="XM_054343085.1"/>
</dbReference>
<dbReference type="RefSeq" id="XP_054199061.1">
    <molecule id="Q9ULF5-1"/>
    <property type="nucleotide sequence ID" value="XM_054343086.1"/>
</dbReference>
<dbReference type="SMR" id="Q9ULF5"/>
<dbReference type="BioGRID" id="121430">
    <property type="interactions" value="208"/>
</dbReference>
<dbReference type="FunCoup" id="Q9ULF5">
    <property type="interactions" value="1957"/>
</dbReference>
<dbReference type="IntAct" id="Q9ULF5">
    <property type="interactions" value="89"/>
</dbReference>
<dbReference type="MINT" id="Q9ULF5"/>
<dbReference type="STRING" id="9606.ENSP00000386766"/>
<dbReference type="DrugBank" id="DB14533">
    <property type="generic name" value="Zinc chloride"/>
</dbReference>
<dbReference type="DrugBank" id="DB14548">
    <property type="generic name" value="Zinc sulfate, unspecified form"/>
</dbReference>
<dbReference type="TCDB" id="2.A.5.4.6">
    <property type="family name" value="the zinc (zn(2+))-iron (fe(2+)) permease (zip) family"/>
</dbReference>
<dbReference type="GlyCosmos" id="Q9ULF5">
    <property type="glycosylation" value="4 sites, No reported glycans"/>
</dbReference>
<dbReference type="GlyGen" id="Q9ULF5">
    <property type="glycosylation" value="13 sites, 12 N-linked glycans (5 sites), 2 O-linked glycans (6 sites)"/>
</dbReference>
<dbReference type="iPTMnet" id="Q9ULF5"/>
<dbReference type="PhosphoSitePlus" id="Q9ULF5"/>
<dbReference type="SwissPalm" id="Q9ULF5"/>
<dbReference type="BioMuta" id="SLC39A10"/>
<dbReference type="DMDM" id="156630627"/>
<dbReference type="jPOST" id="Q9ULF5"/>
<dbReference type="MassIVE" id="Q9ULF5"/>
<dbReference type="PaxDb" id="9606-ENSP00000386766"/>
<dbReference type="PeptideAtlas" id="Q9ULF5"/>
<dbReference type="ProteomicsDB" id="4160"/>
<dbReference type="ProteomicsDB" id="85012">
    <molecule id="Q9ULF5-1"/>
</dbReference>
<dbReference type="Pumba" id="Q9ULF5"/>
<dbReference type="Antibodypedia" id="34052">
    <property type="antibodies" value="129 antibodies from 27 providers"/>
</dbReference>
<dbReference type="DNASU" id="57181"/>
<dbReference type="Ensembl" id="ENST00000359634.10">
    <molecule id="Q9ULF5-1"/>
    <property type="protein sequence ID" value="ENSP00000352655.5"/>
    <property type="gene ID" value="ENSG00000196950.14"/>
</dbReference>
<dbReference type="Ensembl" id="ENST00000409086.7">
    <molecule id="Q9ULF5-1"/>
    <property type="protein sequence ID" value="ENSP00000386766.3"/>
    <property type="gene ID" value="ENSG00000196950.14"/>
</dbReference>
<dbReference type="GeneID" id="57181"/>
<dbReference type="KEGG" id="hsa:57181"/>
<dbReference type="MANE-Select" id="ENST00000359634.10">
    <property type="protein sequence ID" value="ENSP00000352655.5"/>
    <property type="RefSeq nucleotide sequence ID" value="NM_020342.3"/>
    <property type="RefSeq protein sequence ID" value="NP_065075.1"/>
</dbReference>
<dbReference type="UCSC" id="uc002utg.5">
    <molecule id="Q9ULF5-1"/>
    <property type="organism name" value="human"/>
</dbReference>
<dbReference type="AGR" id="HGNC:20861"/>
<dbReference type="CTD" id="57181"/>
<dbReference type="DisGeNET" id="57181"/>
<dbReference type="GeneCards" id="SLC39A10"/>
<dbReference type="HGNC" id="HGNC:20861">
    <property type="gene designation" value="SLC39A10"/>
</dbReference>
<dbReference type="HPA" id="ENSG00000196950">
    <property type="expression patterns" value="Tissue enhanced (brain, thyroid gland)"/>
</dbReference>
<dbReference type="MIM" id="608733">
    <property type="type" value="gene"/>
</dbReference>
<dbReference type="neXtProt" id="NX_Q9ULF5"/>
<dbReference type="OpenTargets" id="ENSG00000196950"/>
<dbReference type="PharmGKB" id="PA134944068"/>
<dbReference type="VEuPathDB" id="HostDB:ENSG00000196950"/>
<dbReference type="eggNOG" id="KOG2693">
    <property type="taxonomic scope" value="Eukaryota"/>
</dbReference>
<dbReference type="GeneTree" id="ENSGT00940000160335"/>
<dbReference type="HOGENOM" id="CLU_015114_13_2_1"/>
<dbReference type="InParanoid" id="Q9ULF5"/>
<dbReference type="OMA" id="HATAHNH"/>
<dbReference type="OrthoDB" id="200954at2759"/>
<dbReference type="PAN-GO" id="Q9ULF5">
    <property type="GO annotations" value="5 GO annotations based on evolutionary models"/>
</dbReference>
<dbReference type="PhylomeDB" id="Q9ULF5"/>
<dbReference type="TreeFam" id="TF318470"/>
<dbReference type="PathwayCommons" id="Q9ULF5"/>
<dbReference type="Reactome" id="R-HSA-442380">
    <property type="pathway name" value="Zinc influx into cells by the SLC39 gene family"/>
</dbReference>
<dbReference type="SignaLink" id="Q9ULF5"/>
<dbReference type="BioGRID-ORCS" id="57181">
    <property type="hits" value="258 hits in 1164 CRISPR screens"/>
</dbReference>
<dbReference type="ChiTaRS" id="SLC39A10">
    <property type="organism name" value="human"/>
</dbReference>
<dbReference type="GeneWiki" id="SLC39A10"/>
<dbReference type="GenomeRNAi" id="57181"/>
<dbReference type="Pharos" id="Q9ULF5">
    <property type="development level" value="Tbio"/>
</dbReference>
<dbReference type="PRO" id="PR:Q9ULF5"/>
<dbReference type="Proteomes" id="UP000005640">
    <property type="component" value="Chromosome 2"/>
</dbReference>
<dbReference type="RNAct" id="Q9ULF5">
    <property type="molecule type" value="protein"/>
</dbReference>
<dbReference type="Bgee" id="ENSG00000196950">
    <property type="expression patterns" value="Expressed in middle temporal gyrus and 179 other cell types or tissues"/>
</dbReference>
<dbReference type="ExpressionAtlas" id="Q9ULF5">
    <property type="expression patterns" value="baseline and differential"/>
</dbReference>
<dbReference type="GO" id="GO:0016324">
    <property type="term" value="C:apical plasma membrane"/>
    <property type="evidence" value="ECO:0000314"/>
    <property type="project" value="UniProtKB"/>
</dbReference>
<dbReference type="GO" id="GO:0005886">
    <property type="term" value="C:plasma membrane"/>
    <property type="evidence" value="ECO:0000314"/>
    <property type="project" value="UniProtKB"/>
</dbReference>
<dbReference type="GO" id="GO:0140410">
    <property type="term" value="F:monoatomic cation:bicarbonate symporter activity"/>
    <property type="evidence" value="ECO:0000318"/>
    <property type="project" value="GO_Central"/>
</dbReference>
<dbReference type="GO" id="GO:0008160">
    <property type="term" value="F:protein tyrosine phosphatase activator activity"/>
    <property type="evidence" value="ECO:0007669"/>
    <property type="project" value="Ensembl"/>
</dbReference>
<dbReference type="GO" id="GO:0005385">
    <property type="term" value="F:zinc ion transmembrane transporter activity"/>
    <property type="evidence" value="ECO:0000314"/>
    <property type="project" value="UniProtKB"/>
</dbReference>
<dbReference type="GO" id="GO:0001837">
    <property type="term" value="P:epithelial to mesenchymal transition"/>
    <property type="evidence" value="ECO:0000315"/>
    <property type="project" value="UniProtKB"/>
</dbReference>
<dbReference type="GO" id="GO:0030003">
    <property type="term" value="P:intracellular monoatomic cation homeostasis"/>
    <property type="evidence" value="ECO:0000318"/>
    <property type="project" value="GO_Central"/>
</dbReference>
<dbReference type="GO" id="GO:0006882">
    <property type="term" value="P:intracellular zinc ion homeostasis"/>
    <property type="evidence" value="ECO:0007669"/>
    <property type="project" value="Ensembl"/>
</dbReference>
<dbReference type="GO" id="GO:0002903">
    <property type="term" value="P:negative regulation of B cell apoptotic process"/>
    <property type="evidence" value="ECO:0007669"/>
    <property type="project" value="Ensembl"/>
</dbReference>
<dbReference type="GO" id="GO:0030890">
    <property type="term" value="P:positive regulation of B cell proliferation"/>
    <property type="evidence" value="ECO:0007669"/>
    <property type="project" value="Ensembl"/>
</dbReference>
<dbReference type="GO" id="GO:0050861">
    <property type="term" value="P:positive regulation of B cell receptor signaling pathway"/>
    <property type="evidence" value="ECO:0007669"/>
    <property type="project" value="Ensembl"/>
</dbReference>
<dbReference type="GO" id="GO:0071578">
    <property type="term" value="P:zinc ion import across plasma membrane"/>
    <property type="evidence" value="ECO:0000318"/>
    <property type="project" value="GO_Central"/>
</dbReference>
<dbReference type="GO" id="GO:0071577">
    <property type="term" value="P:zinc ion transmembrane transport"/>
    <property type="evidence" value="ECO:0000314"/>
    <property type="project" value="UniProtKB"/>
</dbReference>
<dbReference type="InterPro" id="IPR003689">
    <property type="entry name" value="ZIP"/>
</dbReference>
<dbReference type="InterPro" id="IPR050799">
    <property type="entry name" value="ZIP_Transporter"/>
</dbReference>
<dbReference type="PANTHER" id="PTHR12191">
    <property type="entry name" value="SOLUTE CARRIER FAMILY 39"/>
    <property type="match status" value="1"/>
</dbReference>
<dbReference type="PANTHER" id="PTHR12191:SF14">
    <property type="entry name" value="ZINC TRANSPORTER ZIP10"/>
    <property type="match status" value="1"/>
</dbReference>
<dbReference type="Pfam" id="PF02535">
    <property type="entry name" value="Zip"/>
    <property type="match status" value="1"/>
</dbReference>
<feature type="signal peptide" evidence="2">
    <location>
        <begin position="1"/>
        <end position="25"/>
    </location>
</feature>
<feature type="chain" id="PRO_0000297632" description="Zinc transporter ZIP10">
    <location>
        <begin position="26"/>
        <end position="831"/>
    </location>
</feature>
<feature type="transmembrane region" description="Helical" evidence="2">
    <location>
        <begin position="411"/>
        <end position="431"/>
    </location>
</feature>
<feature type="transmembrane region" description="Helical" evidence="2">
    <location>
        <begin position="438"/>
        <end position="458"/>
    </location>
</feature>
<feature type="transmembrane region" description="Helical" evidence="2">
    <location>
        <begin position="495"/>
        <end position="515"/>
    </location>
</feature>
<feature type="transmembrane region" description="Helical" evidence="2">
    <location>
        <begin position="687"/>
        <end position="707"/>
    </location>
</feature>
<feature type="transmembrane region" description="Helical" evidence="2">
    <location>
        <begin position="732"/>
        <end position="752"/>
    </location>
</feature>
<feature type="transmembrane region" description="Helical" evidence="2">
    <location>
        <begin position="759"/>
        <end position="779"/>
    </location>
</feature>
<feature type="transmembrane region" description="Helical" evidence="2">
    <location>
        <begin position="801"/>
        <end position="821"/>
    </location>
</feature>
<feature type="region of interest" description="Disordered" evidence="3">
    <location>
        <begin position="126"/>
        <end position="318"/>
    </location>
</feature>
<feature type="region of interest" description="Disordered" evidence="3">
    <location>
        <begin position="464"/>
        <end position="484"/>
    </location>
</feature>
<feature type="compositionally biased region" description="Polar residues" evidence="3">
    <location>
        <begin position="138"/>
        <end position="147"/>
    </location>
</feature>
<feature type="compositionally biased region" description="Basic and acidic residues" evidence="3">
    <location>
        <begin position="152"/>
        <end position="171"/>
    </location>
</feature>
<feature type="compositionally biased region" description="Basic residues" evidence="3">
    <location>
        <begin position="172"/>
        <end position="188"/>
    </location>
</feature>
<feature type="compositionally biased region" description="Basic and acidic residues" evidence="3">
    <location>
        <begin position="189"/>
        <end position="198"/>
    </location>
</feature>
<feature type="compositionally biased region" description="Polar residues" evidence="3">
    <location>
        <begin position="211"/>
        <end position="221"/>
    </location>
</feature>
<feature type="compositionally biased region" description="Basic residues" evidence="3">
    <location>
        <begin position="229"/>
        <end position="238"/>
    </location>
</feature>
<feature type="compositionally biased region" description="Basic and acidic residues" evidence="3">
    <location>
        <begin position="256"/>
        <end position="273"/>
    </location>
</feature>
<feature type="compositionally biased region" description="Basic and acidic residues" evidence="3">
    <location>
        <begin position="281"/>
        <end position="315"/>
    </location>
</feature>
<feature type="modified residue" description="Phosphothreonine" evidence="14">
    <location>
        <position position="536"/>
    </location>
</feature>
<feature type="modified residue" description="Phosphothreonine" evidence="13">
    <location>
        <position position="553"/>
    </location>
</feature>
<feature type="modified residue" description="Phosphoserine" evidence="14 15">
    <location>
        <position position="591"/>
    </location>
</feature>
<feature type="glycosylation site" description="N-linked (GlcNAc...) asparagine" evidence="2">
    <location>
        <position position="139"/>
    </location>
</feature>
<feature type="glycosylation site" description="N-linked (GlcNAc...) asparagine" evidence="2">
    <location>
        <position position="198"/>
    </location>
</feature>
<feature type="glycosylation site" description="N-linked (GlcNAc...) asparagine" evidence="2">
    <location>
        <position position="218"/>
    </location>
</feature>
<feature type="glycosylation site" description="N-linked (GlcNAc...) asparagine" evidence="2">
    <location>
        <position position="339"/>
    </location>
</feature>
<feature type="splice variant" id="VSP_055991" description="In isoform 2." evidence="9">
    <location>
        <begin position="1"/>
        <end position="450"/>
    </location>
</feature>
<feature type="sequence variant" id="VAR_034658" description="In dbSNP:rs13419724.">
    <original>T</original>
    <variation>S</variation>
    <location>
        <position position="87"/>
    </location>
</feature>
<feature type="sequence conflict" description="In Ref. 3; CAB43393/CAH18673." evidence="10" ref="3">
    <original>I</original>
    <variation>T</variation>
    <location>
        <position position="426"/>
    </location>
</feature>